<feature type="chain" id="PRO_0000286492" description="Single-stranded DNA-binding protein">
    <location>
        <begin position="1"/>
        <end position="152"/>
    </location>
</feature>
<feature type="domain" description="SSB" evidence="1">
    <location>
        <begin position="5"/>
        <end position="111"/>
    </location>
</feature>
<feature type="DNA-binding region" evidence="1">
    <location>
        <begin position="54"/>
        <end position="60"/>
    </location>
</feature>
<feature type="region of interest" description="Disordered" evidence="2">
    <location>
        <begin position="115"/>
        <end position="152"/>
    </location>
</feature>
<feature type="short sequence motif" description="Important for interaction with partner proteins" evidence="1">
    <location>
        <begin position="147"/>
        <end position="152"/>
    </location>
</feature>
<feature type="compositionally biased region" description="Polar residues" evidence="2">
    <location>
        <begin position="115"/>
        <end position="124"/>
    </location>
</feature>
<feature type="compositionally biased region" description="Basic and acidic residues" evidence="2">
    <location>
        <begin position="125"/>
        <end position="144"/>
    </location>
</feature>
<name>SSB_RICFE</name>
<dbReference type="EMBL" id="CP000053">
    <property type="protein sequence ID" value="AAY62176.1"/>
    <property type="molecule type" value="Genomic_DNA"/>
</dbReference>
<dbReference type="SMR" id="Q4UJW3"/>
<dbReference type="STRING" id="315456.RF_1325"/>
<dbReference type="KEGG" id="rfe:RF_1325"/>
<dbReference type="eggNOG" id="COG0629">
    <property type="taxonomic scope" value="Bacteria"/>
</dbReference>
<dbReference type="HOGENOM" id="CLU_078758_0_2_5"/>
<dbReference type="OrthoDB" id="9809878at2"/>
<dbReference type="Proteomes" id="UP000008548">
    <property type="component" value="Chromosome"/>
</dbReference>
<dbReference type="GO" id="GO:0009295">
    <property type="term" value="C:nucleoid"/>
    <property type="evidence" value="ECO:0007669"/>
    <property type="project" value="TreeGrafter"/>
</dbReference>
<dbReference type="GO" id="GO:0003697">
    <property type="term" value="F:single-stranded DNA binding"/>
    <property type="evidence" value="ECO:0007669"/>
    <property type="project" value="UniProtKB-UniRule"/>
</dbReference>
<dbReference type="GO" id="GO:0006310">
    <property type="term" value="P:DNA recombination"/>
    <property type="evidence" value="ECO:0007669"/>
    <property type="project" value="UniProtKB-UniRule"/>
</dbReference>
<dbReference type="GO" id="GO:0006281">
    <property type="term" value="P:DNA repair"/>
    <property type="evidence" value="ECO:0007669"/>
    <property type="project" value="UniProtKB-UniRule"/>
</dbReference>
<dbReference type="GO" id="GO:0006260">
    <property type="term" value="P:DNA replication"/>
    <property type="evidence" value="ECO:0007669"/>
    <property type="project" value="UniProtKB-UniRule"/>
</dbReference>
<dbReference type="CDD" id="cd04496">
    <property type="entry name" value="SSB_OBF"/>
    <property type="match status" value="1"/>
</dbReference>
<dbReference type="Gene3D" id="2.40.50.140">
    <property type="entry name" value="Nucleic acid-binding proteins"/>
    <property type="match status" value="1"/>
</dbReference>
<dbReference type="HAMAP" id="MF_00984">
    <property type="entry name" value="SSB"/>
    <property type="match status" value="1"/>
</dbReference>
<dbReference type="InterPro" id="IPR012340">
    <property type="entry name" value="NA-bd_OB-fold"/>
</dbReference>
<dbReference type="InterPro" id="IPR000424">
    <property type="entry name" value="Primosome_PriB/ssb"/>
</dbReference>
<dbReference type="InterPro" id="IPR011344">
    <property type="entry name" value="ssDNA-bd"/>
</dbReference>
<dbReference type="NCBIfam" id="NF005170">
    <property type="entry name" value="PRK06642.1"/>
    <property type="match status" value="1"/>
</dbReference>
<dbReference type="NCBIfam" id="TIGR00621">
    <property type="entry name" value="ssb"/>
    <property type="match status" value="1"/>
</dbReference>
<dbReference type="PANTHER" id="PTHR10302">
    <property type="entry name" value="SINGLE-STRANDED DNA-BINDING PROTEIN"/>
    <property type="match status" value="1"/>
</dbReference>
<dbReference type="PANTHER" id="PTHR10302:SF27">
    <property type="entry name" value="SINGLE-STRANDED DNA-BINDING PROTEIN"/>
    <property type="match status" value="1"/>
</dbReference>
<dbReference type="Pfam" id="PF00436">
    <property type="entry name" value="SSB"/>
    <property type="match status" value="1"/>
</dbReference>
<dbReference type="PIRSF" id="PIRSF002070">
    <property type="entry name" value="SSB"/>
    <property type="match status" value="1"/>
</dbReference>
<dbReference type="SUPFAM" id="SSF50249">
    <property type="entry name" value="Nucleic acid-binding proteins"/>
    <property type="match status" value="1"/>
</dbReference>
<dbReference type="PROSITE" id="PS50935">
    <property type="entry name" value="SSB"/>
    <property type="match status" value="1"/>
</dbReference>
<evidence type="ECO:0000255" key="1">
    <source>
        <dbReference type="HAMAP-Rule" id="MF_00984"/>
    </source>
</evidence>
<evidence type="ECO:0000256" key="2">
    <source>
        <dbReference type="SAM" id="MobiDB-lite"/>
    </source>
</evidence>
<sequence length="152" mass="17393">MAGSLNKVILIGNVGRDPEIRTTGEGKKIINLSLATTETWKDRITSERKERTEWHRVVIFSEGLVSVVERYVTKGSKLYIEGSLQTRKWNDNSGQEKYTTEVVLQNFNSQLILLDSKNSNNHTQDSGRSEYKHPEAKNHSFDHSDLDDEIPF</sequence>
<proteinExistence type="inferred from homology"/>
<keyword id="KW-0227">DNA damage</keyword>
<keyword id="KW-0233">DNA recombination</keyword>
<keyword id="KW-0234">DNA repair</keyword>
<keyword id="KW-0235">DNA replication</keyword>
<keyword id="KW-0238">DNA-binding</keyword>
<accession>Q4UJW3</accession>
<reference key="1">
    <citation type="journal article" date="2005" name="PLoS Biol.">
        <title>The genome sequence of Rickettsia felis identifies the first putative conjugative plasmid in an obligate intracellular parasite.</title>
        <authorList>
            <person name="Ogata H."/>
            <person name="Renesto P."/>
            <person name="Audic S."/>
            <person name="Robert C."/>
            <person name="Blanc G."/>
            <person name="Fournier P.-E."/>
            <person name="Parinello H."/>
            <person name="Claverie J.-M."/>
            <person name="Raoult D."/>
        </authorList>
    </citation>
    <scope>NUCLEOTIDE SEQUENCE [LARGE SCALE GENOMIC DNA]</scope>
    <source>
        <strain>ATCC VR-1525 / URRWXCal2</strain>
    </source>
</reference>
<protein>
    <recommendedName>
        <fullName evidence="1">Single-stranded DNA-binding protein</fullName>
        <shortName evidence="1">SSB</shortName>
    </recommendedName>
</protein>
<organism>
    <name type="scientific">Rickettsia felis (strain ATCC VR-1525 / URRWXCal2)</name>
    <name type="common">Rickettsia azadi</name>
    <dbReference type="NCBI Taxonomy" id="315456"/>
    <lineage>
        <taxon>Bacteria</taxon>
        <taxon>Pseudomonadati</taxon>
        <taxon>Pseudomonadota</taxon>
        <taxon>Alphaproteobacteria</taxon>
        <taxon>Rickettsiales</taxon>
        <taxon>Rickettsiaceae</taxon>
        <taxon>Rickettsieae</taxon>
        <taxon>Rickettsia</taxon>
        <taxon>spotted fever group</taxon>
    </lineage>
</organism>
<gene>
    <name type="primary">ssb</name>
    <name type="ordered locus">RF_1325</name>
</gene>
<comment type="function">
    <text evidence="1">Plays an important role in DNA replication, recombination and repair. Binds to ssDNA and to an array of partner proteins to recruit them to their sites of action during DNA metabolism.</text>
</comment>
<comment type="subunit">
    <text evidence="1">Homotetramer.</text>
</comment>